<feature type="signal peptide" evidence="2">
    <location>
        <begin position="1"/>
        <end status="unknown"/>
    </location>
</feature>
<feature type="chain" id="PRO_0000009306" description="Outer membrane usher protein CssD">
    <location>
        <begin status="unknown"/>
        <end position="819"/>
    </location>
</feature>
<accession>P53512</accession>
<comment type="function">
    <text>Involved in the export and assembly of C6 fimbrial subunits across the outer membrane.</text>
</comment>
<comment type="subcellular location">
    <subcellularLocation>
        <location evidence="1">Cell outer membrane</location>
        <topology evidence="1">Multi-pass membrane protein</topology>
    </subcellularLocation>
</comment>
<comment type="similarity">
    <text evidence="3">Belongs to the fimbrial export usher family.</text>
</comment>
<organism>
    <name type="scientific">Escherichia coli</name>
    <dbReference type="NCBI Taxonomy" id="562"/>
    <lineage>
        <taxon>Bacteria</taxon>
        <taxon>Pseudomonadati</taxon>
        <taxon>Pseudomonadota</taxon>
        <taxon>Gammaproteobacteria</taxon>
        <taxon>Enterobacterales</taxon>
        <taxon>Enterobacteriaceae</taxon>
        <taxon>Escherichia</taxon>
    </lineage>
</organism>
<protein>
    <recommendedName>
        <fullName>Outer membrane usher protein CssD</fullName>
    </recommendedName>
    <alternativeName>
        <fullName>CS6 fimbria usher protein</fullName>
    </alternativeName>
</protein>
<gene>
    <name type="primary">cssD</name>
</gene>
<reference key="1">
    <citation type="submission" date="1994-01" db="EMBL/GenBank/DDBJ databases">
        <authorList>
            <person name="Wolf M.K."/>
            <person name="de Haan L."/>
            <person name="Cassels F.C."/>
            <person name="Willshaw G.A."/>
            <person name="van Gestel E."/>
            <person name="Gaastra W."/>
            <person name="Warren R."/>
            <person name="Boedeker E.C."/>
        </authorList>
    </citation>
    <scope>NUCLEOTIDE SEQUENCE [GENOMIC DNA]</scope>
    <source>
        <strain>O167:H5 / E10703 / EIEC</strain>
    </source>
</reference>
<name>CSSD1_ECOLX</name>
<proteinExistence type="inferred from homology"/>
<dbReference type="EMBL" id="U04844">
    <property type="protein sequence ID" value="AAC45096.1"/>
    <property type="molecule type" value="Unassigned_DNA"/>
</dbReference>
<dbReference type="PIR" id="I83350">
    <property type="entry name" value="I83350"/>
</dbReference>
<dbReference type="RefSeq" id="WP_000978936.1">
    <property type="nucleotide sequence ID" value="NZ_UGCI01000001.1"/>
</dbReference>
<dbReference type="RefSeq" id="YP_008531442.1">
    <property type="nucleotide sequence ID" value="NC_022333.1"/>
</dbReference>
<dbReference type="SMR" id="P53512"/>
<dbReference type="GO" id="GO:0009279">
    <property type="term" value="C:cell outer membrane"/>
    <property type="evidence" value="ECO:0007669"/>
    <property type="project" value="UniProtKB-SubCell"/>
</dbReference>
<dbReference type="GO" id="GO:0015473">
    <property type="term" value="F:fimbrial usher porin activity"/>
    <property type="evidence" value="ECO:0007669"/>
    <property type="project" value="InterPro"/>
</dbReference>
<dbReference type="GO" id="GO:0009297">
    <property type="term" value="P:pilus assembly"/>
    <property type="evidence" value="ECO:0007669"/>
    <property type="project" value="InterPro"/>
</dbReference>
<dbReference type="Gene3D" id="2.60.40.2070">
    <property type="match status" value="1"/>
</dbReference>
<dbReference type="Gene3D" id="2.60.40.3110">
    <property type="match status" value="1"/>
</dbReference>
<dbReference type="Gene3D" id="3.10.20.410">
    <property type="match status" value="1"/>
</dbReference>
<dbReference type="Gene3D" id="2.60.40.2610">
    <property type="entry name" value="Outer membrane usher protein FimD, plug domain"/>
    <property type="match status" value="1"/>
</dbReference>
<dbReference type="InterPro" id="IPR000015">
    <property type="entry name" value="Fimb_usher"/>
</dbReference>
<dbReference type="InterPro" id="IPR042186">
    <property type="entry name" value="FimD_plug_dom"/>
</dbReference>
<dbReference type="InterPro" id="IPR025949">
    <property type="entry name" value="PapC-like_C"/>
</dbReference>
<dbReference type="InterPro" id="IPR043142">
    <property type="entry name" value="PapC-like_C_sf"/>
</dbReference>
<dbReference type="InterPro" id="IPR025885">
    <property type="entry name" value="PapC_N"/>
</dbReference>
<dbReference type="InterPro" id="IPR037224">
    <property type="entry name" value="PapC_N_sf"/>
</dbReference>
<dbReference type="PANTHER" id="PTHR30451:SF21">
    <property type="entry name" value="FIMBRIAL USHER DOMAIN-CONTAINING PROTEIN YDET-RELATED"/>
    <property type="match status" value="1"/>
</dbReference>
<dbReference type="PANTHER" id="PTHR30451">
    <property type="entry name" value="OUTER MEMBRANE USHER PROTEIN"/>
    <property type="match status" value="1"/>
</dbReference>
<dbReference type="Pfam" id="PF13953">
    <property type="entry name" value="PapC_C"/>
    <property type="match status" value="1"/>
</dbReference>
<dbReference type="Pfam" id="PF13954">
    <property type="entry name" value="PapC_N"/>
    <property type="match status" value="1"/>
</dbReference>
<dbReference type="Pfam" id="PF00577">
    <property type="entry name" value="Usher"/>
    <property type="match status" value="1"/>
</dbReference>
<dbReference type="SUPFAM" id="SSF141729">
    <property type="entry name" value="FimD N-terminal domain-like"/>
    <property type="match status" value="1"/>
</dbReference>
<sequence length="819" mass="92379">MMLAQKQNFMNQFYKKYHYSIQKYQITDLLFFLFLYPFSTSYGNEQFSFDSRFLPSGYNYSLNSNLPPEGEYLVDIYINKIKKESAIIPFYIKGNKLVPCLSKEKLSSLGININNNDNAECAETSKAGISNISFEFSSLRLFIAVPKNLLSEIDKISSKDIDNGIHALFFNYQVNTRLANNKNRYDYISVSPNINYFSWRLRNRFEFNQNNDKKTWERNYTYLEKSFYDKKLNLIVGESYTSSNVYNNYSFTGISVSTDTDMYTPSEIDYTPEIHGVADSDSQIIVRQGNTIIINESVPAGPFSFPITNLMYTGGQLNVEITDIYGNKKQYTVSNSSLPVMRKAGLMVYNFISGKLTKKNSEDGDFFAQGDINYGTHYNSTLFGGYQFSKNYFNLSTGIGTDLGFSGAWLLNVSRSNFKDKNGYNINLQQNTQLRPFNAGVNFDYIYRKKGYVELSGIGWHGNLYNQLKNSFSLSLSKSLDKYGNFSLDYNKIKYWDNAYDSNSMSIRYFFKFMRAMITTNYSLNKYQSYEKKDKRFSINISLPLTKDYGHISSNYSFSNANTGTATSSVGVNGSFFNDARLNWNIQQNRTTRNNGYTDNTSYIATSYASPYGVFTGSYSGSNKYSSQFYSALGGIVLHSDGVAFTQKAGDTSALVRIDNISDIKIGNTPGVYTGYNGFALIPHLQPFKKNTILINDKGIPDDIALANIKKQVIPSRGAIVKVKFDAKKGNNILFKLTTKDGKTPPLGAIAHEKNGKQINTGIVDDDGMLYMSGLSGAGIINVTWNGKVCSFPFSEKDISSKQLSVVNKQCNRPENSGD</sequence>
<keyword id="KW-0998">Cell outer membrane</keyword>
<keyword id="KW-1029">Fimbrium biogenesis</keyword>
<keyword id="KW-0472">Membrane</keyword>
<keyword id="KW-0732">Signal</keyword>
<keyword id="KW-0812">Transmembrane</keyword>
<keyword id="KW-1134">Transmembrane beta strand</keyword>
<keyword id="KW-0813">Transport</keyword>
<evidence type="ECO:0000250" key="1"/>
<evidence type="ECO:0000255" key="2"/>
<evidence type="ECO:0000305" key="3"/>